<sequence>MFTKLATKMFGSKNAREIKRMRKVVTRINELEEQFGALSDTELQGKTAEFRRRLDEGEALDSLLPEVFATVREASRRVMGMRHYDVQLIGGMTLHEGRIAEMKTGEGKTLVATAAVYLNALPGKGVHVVTVNDYLARRDAEWMGKLYRFLGMQVGVVASGQPPEEKRAAYQADITYGTNNEFGFDYLRDNMAFSIEDKVQRGLNFAIVDEVDSILIDEARTPLIISGAAEDSSKLYQAVNALVPSLEKGEVSEEGESSGDFTIDEKSRQVELTESGHEKVEDLLLGQGLLKEGESLYSAANLSLLHHVHSALRAHHLFQKDVDYIVQGGQVVIVDEHTGRTMPGRRWSEGLHQAIEAKEGLKIQAESQTLASTTFQNYFRLYDKLAGMTGTADTEAFEFRQIYGLDVVVIPPNKPIQRIDYNDLVYLTQEEKFHAIIDEIKDVTAEGRPILVGTASIEASELLSMLLKKARIDHKILNAKQHESEALIIAQAGRPGAVTIATNMAGRGTDIVLGGNWEYEVAALDNPSEEEVARMKAEWTERHNQVLDAGGLHIIGTERHESRRIDNQLRGRAGRQGDPGSSRFFLSLEDNLMRIFAPERVKNLMQAMGMKKGEAIEHRMVTNAIEKSQRKVEGRNFDMRKTLLEYDDVANDQRTVIYEQRNEVMASNDISEMIDTIREDVVDSVVSEFIPPQSMPEQWDVQGLEAQLQSEMAIELPIQQWLKDDNKLYEDNLRQKILDAIVAEYKAKEEVAGSEAMRKFEKQVFLQVLDTLWKEHLSNMDHLRRGIHLRGYAQKNPKQEYKREAFNLFETMLDTMKRDVTRVLCHVRVQSQEEMAEIERRRKEELEREMARAKLRHEQASAAQAEGEGDDGQQGQQATPETFVRQERKVGRNEPCPCGSGKKYKQCCGKVS</sequence>
<evidence type="ECO:0000255" key="1">
    <source>
        <dbReference type="HAMAP-Rule" id="MF_01382"/>
    </source>
</evidence>
<evidence type="ECO:0000256" key="2">
    <source>
        <dbReference type="SAM" id="MobiDB-lite"/>
    </source>
</evidence>
<feature type="chain" id="PRO_0000320847" description="Protein translocase subunit SecA">
    <location>
        <begin position="1"/>
        <end position="912"/>
    </location>
</feature>
<feature type="region of interest" description="Disordered" evidence="2">
    <location>
        <begin position="854"/>
        <end position="912"/>
    </location>
</feature>
<feature type="binding site" evidence="1">
    <location>
        <position position="87"/>
    </location>
    <ligand>
        <name>ATP</name>
        <dbReference type="ChEBI" id="CHEBI:30616"/>
    </ligand>
</feature>
<feature type="binding site" evidence="1">
    <location>
        <begin position="105"/>
        <end position="109"/>
    </location>
    <ligand>
        <name>ATP</name>
        <dbReference type="ChEBI" id="CHEBI:30616"/>
    </ligand>
</feature>
<feature type="binding site" evidence="1">
    <location>
        <position position="510"/>
    </location>
    <ligand>
        <name>ATP</name>
        <dbReference type="ChEBI" id="CHEBI:30616"/>
    </ligand>
</feature>
<feature type="binding site" evidence="1">
    <location>
        <position position="896"/>
    </location>
    <ligand>
        <name>Zn(2+)</name>
        <dbReference type="ChEBI" id="CHEBI:29105"/>
    </ligand>
</feature>
<feature type="binding site" evidence="1">
    <location>
        <position position="898"/>
    </location>
    <ligand>
        <name>Zn(2+)</name>
        <dbReference type="ChEBI" id="CHEBI:29105"/>
    </ligand>
</feature>
<feature type="binding site" evidence="1">
    <location>
        <position position="907"/>
    </location>
    <ligand>
        <name>Zn(2+)</name>
        <dbReference type="ChEBI" id="CHEBI:29105"/>
    </ligand>
</feature>
<feature type="binding site" evidence="1">
    <location>
        <position position="908"/>
    </location>
    <ligand>
        <name>Zn(2+)</name>
        <dbReference type="ChEBI" id="CHEBI:29105"/>
    </ligand>
</feature>
<proteinExistence type="inferred from homology"/>
<reference key="1">
    <citation type="journal article" date="2011" name="Appl. Environ. Microbiol.">
        <title>Genomic potential of Marinobacter aquaeolei, a biogeochemical 'opportunitroph'.</title>
        <authorList>
            <person name="Singer E."/>
            <person name="Webb E.A."/>
            <person name="Nelson W.C."/>
            <person name="Heidelberg J.F."/>
            <person name="Ivanova N."/>
            <person name="Pati A."/>
            <person name="Edwards K.J."/>
        </authorList>
    </citation>
    <scope>NUCLEOTIDE SEQUENCE [LARGE SCALE GENOMIC DNA]</scope>
    <source>
        <strain>ATCC 700491 / DSM 11845 / VT8</strain>
    </source>
</reference>
<comment type="function">
    <text evidence="1">Part of the Sec protein translocase complex. Interacts with the SecYEG preprotein conducting channel. Has a central role in coupling the hydrolysis of ATP to the transfer of proteins into and across the cell membrane, serving both as a receptor for the preprotein-SecB complex and as an ATP-driven molecular motor driving the stepwise translocation of polypeptide chains across the membrane.</text>
</comment>
<comment type="catalytic activity">
    <reaction evidence="1">
        <text>ATP + H2O + cellular proteinSide 1 = ADP + phosphate + cellular proteinSide 2.</text>
        <dbReference type="EC" id="7.4.2.8"/>
    </reaction>
</comment>
<comment type="cofactor">
    <cofactor evidence="1">
        <name>Zn(2+)</name>
        <dbReference type="ChEBI" id="CHEBI:29105"/>
    </cofactor>
    <text evidence="1">May bind 1 zinc ion per subunit.</text>
</comment>
<comment type="subunit">
    <text evidence="1">Monomer and homodimer. Part of the essential Sec protein translocation apparatus which comprises SecA, SecYEG and auxiliary proteins SecDF-YajC and YidC.</text>
</comment>
<comment type="subcellular location">
    <subcellularLocation>
        <location evidence="1">Cell inner membrane</location>
        <topology evidence="1">Peripheral membrane protein</topology>
        <orientation evidence="1">Cytoplasmic side</orientation>
    </subcellularLocation>
    <subcellularLocation>
        <location evidence="1">Cytoplasm</location>
    </subcellularLocation>
    <text evidence="1">Distribution is 50-50.</text>
</comment>
<comment type="similarity">
    <text evidence="1">Belongs to the SecA family.</text>
</comment>
<dbReference type="EC" id="7.4.2.8" evidence="1"/>
<dbReference type="EMBL" id="CP000514">
    <property type="protein sequence ID" value="ABM19518.1"/>
    <property type="molecule type" value="Genomic_DNA"/>
</dbReference>
<dbReference type="RefSeq" id="WP_011785902.1">
    <property type="nucleotide sequence ID" value="NC_008740.1"/>
</dbReference>
<dbReference type="SMR" id="A1U3E9"/>
<dbReference type="STRING" id="351348.Maqu_2443"/>
<dbReference type="KEGG" id="maq:Maqu_2443"/>
<dbReference type="eggNOG" id="COG0653">
    <property type="taxonomic scope" value="Bacteria"/>
</dbReference>
<dbReference type="HOGENOM" id="CLU_005314_3_0_6"/>
<dbReference type="OrthoDB" id="9805579at2"/>
<dbReference type="Proteomes" id="UP000000998">
    <property type="component" value="Chromosome"/>
</dbReference>
<dbReference type="GO" id="GO:0031522">
    <property type="term" value="C:cell envelope Sec protein transport complex"/>
    <property type="evidence" value="ECO:0007669"/>
    <property type="project" value="TreeGrafter"/>
</dbReference>
<dbReference type="GO" id="GO:0005829">
    <property type="term" value="C:cytosol"/>
    <property type="evidence" value="ECO:0007669"/>
    <property type="project" value="TreeGrafter"/>
</dbReference>
<dbReference type="GO" id="GO:0005886">
    <property type="term" value="C:plasma membrane"/>
    <property type="evidence" value="ECO:0007669"/>
    <property type="project" value="UniProtKB-SubCell"/>
</dbReference>
<dbReference type="GO" id="GO:0005524">
    <property type="term" value="F:ATP binding"/>
    <property type="evidence" value="ECO:0007669"/>
    <property type="project" value="UniProtKB-UniRule"/>
</dbReference>
<dbReference type="GO" id="GO:0046872">
    <property type="term" value="F:metal ion binding"/>
    <property type="evidence" value="ECO:0007669"/>
    <property type="project" value="UniProtKB-KW"/>
</dbReference>
<dbReference type="GO" id="GO:0008564">
    <property type="term" value="F:protein-exporting ATPase activity"/>
    <property type="evidence" value="ECO:0007669"/>
    <property type="project" value="UniProtKB-EC"/>
</dbReference>
<dbReference type="GO" id="GO:0065002">
    <property type="term" value="P:intracellular protein transmembrane transport"/>
    <property type="evidence" value="ECO:0007669"/>
    <property type="project" value="UniProtKB-UniRule"/>
</dbReference>
<dbReference type="GO" id="GO:0017038">
    <property type="term" value="P:protein import"/>
    <property type="evidence" value="ECO:0007669"/>
    <property type="project" value="InterPro"/>
</dbReference>
<dbReference type="GO" id="GO:0006605">
    <property type="term" value="P:protein targeting"/>
    <property type="evidence" value="ECO:0007669"/>
    <property type="project" value="UniProtKB-UniRule"/>
</dbReference>
<dbReference type="GO" id="GO:0043952">
    <property type="term" value="P:protein transport by the Sec complex"/>
    <property type="evidence" value="ECO:0007669"/>
    <property type="project" value="TreeGrafter"/>
</dbReference>
<dbReference type="CDD" id="cd17928">
    <property type="entry name" value="DEXDc_SecA"/>
    <property type="match status" value="1"/>
</dbReference>
<dbReference type="CDD" id="cd18803">
    <property type="entry name" value="SF2_C_secA"/>
    <property type="match status" value="1"/>
</dbReference>
<dbReference type="FunFam" id="3.40.50.300:FF:000113">
    <property type="entry name" value="Preprotein translocase subunit SecA"/>
    <property type="match status" value="1"/>
</dbReference>
<dbReference type="FunFam" id="3.90.1440.10:FF:000001">
    <property type="entry name" value="Preprotein translocase subunit SecA"/>
    <property type="match status" value="1"/>
</dbReference>
<dbReference type="FunFam" id="1.10.3060.10:FF:000003">
    <property type="entry name" value="Protein translocase subunit SecA"/>
    <property type="match status" value="1"/>
</dbReference>
<dbReference type="FunFam" id="3.40.50.300:FF:000334">
    <property type="entry name" value="Protein translocase subunit SecA"/>
    <property type="match status" value="1"/>
</dbReference>
<dbReference type="Gene3D" id="1.10.3060.10">
    <property type="entry name" value="Helical scaffold and wing domains of SecA"/>
    <property type="match status" value="1"/>
</dbReference>
<dbReference type="Gene3D" id="3.40.50.300">
    <property type="entry name" value="P-loop containing nucleotide triphosphate hydrolases"/>
    <property type="match status" value="2"/>
</dbReference>
<dbReference type="Gene3D" id="3.90.1440.10">
    <property type="entry name" value="SecA, preprotein cross-linking domain"/>
    <property type="match status" value="1"/>
</dbReference>
<dbReference type="HAMAP" id="MF_01382">
    <property type="entry name" value="SecA"/>
    <property type="match status" value="1"/>
</dbReference>
<dbReference type="InterPro" id="IPR014001">
    <property type="entry name" value="Helicase_ATP-bd"/>
</dbReference>
<dbReference type="InterPro" id="IPR001650">
    <property type="entry name" value="Helicase_C-like"/>
</dbReference>
<dbReference type="InterPro" id="IPR027417">
    <property type="entry name" value="P-loop_NTPase"/>
</dbReference>
<dbReference type="InterPro" id="IPR004027">
    <property type="entry name" value="SEC_C_motif"/>
</dbReference>
<dbReference type="InterPro" id="IPR000185">
    <property type="entry name" value="SecA"/>
</dbReference>
<dbReference type="InterPro" id="IPR020937">
    <property type="entry name" value="SecA_CS"/>
</dbReference>
<dbReference type="InterPro" id="IPR011115">
    <property type="entry name" value="SecA_DEAD"/>
</dbReference>
<dbReference type="InterPro" id="IPR014018">
    <property type="entry name" value="SecA_motor_DEAD"/>
</dbReference>
<dbReference type="InterPro" id="IPR011130">
    <property type="entry name" value="SecA_preprotein_X-link_dom"/>
</dbReference>
<dbReference type="InterPro" id="IPR044722">
    <property type="entry name" value="SecA_SF2_C"/>
</dbReference>
<dbReference type="InterPro" id="IPR011116">
    <property type="entry name" value="SecA_Wing/Scaffold"/>
</dbReference>
<dbReference type="InterPro" id="IPR036266">
    <property type="entry name" value="SecA_Wing/Scaffold_sf"/>
</dbReference>
<dbReference type="InterPro" id="IPR036670">
    <property type="entry name" value="SecA_X-link_sf"/>
</dbReference>
<dbReference type="NCBIfam" id="NF009538">
    <property type="entry name" value="PRK12904.1"/>
    <property type="match status" value="1"/>
</dbReference>
<dbReference type="NCBIfam" id="TIGR00963">
    <property type="entry name" value="secA"/>
    <property type="match status" value="1"/>
</dbReference>
<dbReference type="PANTHER" id="PTHR30612:SF0">
    <property type="entry name" value="CHLOROPLAST PROTEIN-TRANSPORTING ATPASE"/>
    <property type="match status" value="1"/>
</dbReference>
<dbReference type="PANTHER" id="PTHR30612">
    <property type="entry name" value="SECA INNER MEMBRANE COMPONENT OF SEC PROTEIN SECRETION SYSTEM"/>
    <property type="match status" value="1"/>
</dbReference>
<dbReference type="Pfam" id="PF21090">
    <property type="entry name" value="P-loop_SecA"/>
    <property type="match status" value="1"/>
</dbReference>
<dbReference type="Pfam" id="PF02810">
    <property type="entry name" value="SEC-C"/>
    <property type="match status" value="1"/>
</dbReference>
<dbReference type="Pfam" id="PF07517">
    <property type="entry name" value="SecA_DEAD"/>
    <property type="match status" value="1"/>
</dbReference>
<dbReference type="Pfam" id="PF01043">
    <property type="entry name" value="SecA_PP_bind"/>
    <property type="match status" value="1"/>
</dbReference>
<dbReference type="Pfam" id="PF07516">
    <property type="entry name" value="SecA_SW"/>
    <property type="match status" value="1"/>
</dbReference>
<dbReference type="PRINTS" id="PR00906">
    <property type="entry name" value="SECA"/>
</dbReference>
<dbReference type="SMART" id="SM00957">
    <property type="entry name" value="SecA_DEAD"/>
    <property type="match status" value="1"/>
</dbReference>
<dbReference type="SMART" id="SM00958">
    <property type="entry name" value="SecA_PP_bind"/>
    <property type="match status" value="1"/>
</dbReference>
<dbReference type="SUPFAM" id="SSF81886">
    <property type="entry name" value="Helical scaffold and wing domains of SecA"/>
    <property type="match status" value="1"/>
</dbReference>
<dbReference type="SUPFAM" id="SSF52540">
    <property type="entry name" value="P-loop containing nucleoside triphosphate hydrolases"/>
    <property type="match status" value="2"/>
</dbReference>
<dbReference type="SUPFAM" id="SSF81767">
    <property type="entry name" value="Pre-protein crosslinking domain of SecA"/>
    <property type="match status" value="1"/>
</dbReference>
<dbReference type="PROSITE" id="PS01312">
    <property type="entry name" value="SECA"/>
    <property type="match status" value="1"/>
</dbReference>
<dbReference type="PROSITE" id="PS51196">
    <property type="entry name" value="SECA_MOTOR_DEAD"/>
    <property type="match status" value="1"/>
</dbReference>
<keyword id="KW-0067">ATP-binding</keyword>
<keyword id="KW-0997">Cell inner membrane</keyword>
<keyword id="KW-1003">Cell membrane</keyword>
<keyword id="KW-0963">Cytoplasm</keyword>
<keyword id="KW-0472">Membrane</keyword>
<keyword id="KW-0479">Metal-binding</keyword>
<keyword id="KW-0547">Nucleotide-binding</keyword>
<keyword id="KW-0653">Protein transport</keyword>
<keyword id="KW-1278">Translocase</keyword>
<keyword id="KW-0811">Translocation</keyword>
<keyword id="KW-0813">Transport</keyword>
<keyword id="KW-0862">Zinc</keyword>
<gene>
    <name evidence="1" type="primary">secA</name>
    <name type="ordered locus">Maqu_2443</name>
</gene>
<protein>
    <recommendedName>
        <fullName evidence="1">Protein translocase subunit SecA</fullName>
        <ecNumber evidence="1">7.4.2.8</ecNumber>
    </recommendedName>
</protein>
<name>SECA_MARN8</name>
<accession>A1U3E9</accession>
<organism>
    <name type="scientific">Marinobacter nauticus (strain ATCC 700491 / DSM 11845 / VT8)</name>
    <name type="common">Marinobacter aquaeolei</name>
    <dbReference type="NCBI Taxonomy" id="351348"/>
    <lineage>
        <taxon>Bacteria</taxon>
        <taxon>Pseudomonadati</taxon>
        <taxon>Pseudomonadota</taxon>
        <taxon>Gammaproteobacteria</taxon>
        <taxon>Pseudomonadales</taxon>
        <taxon>Marinobacteraceae</taxon>
        <taxon>Marinobacter</taxon>
    </lineage>
</organism>